<sequence length="445" mass="50813">MGTSRYFVRKTTIPPPKRPRRIHVSPCHDTPILFGDEVKRCPWGHLAYGGSCLQSITLRDSETSMEELLPHDVIEYHIMVRLDVKTLLKFKSVSKQWMSTIQSPSFQERQLIHHLSQSSGDPHVLLVSLYDPCARQQDPSISSFEALRTFLVESSAASVQIPTPWEDKLYFVCNTSCDGLICLFSFYELPSIVVNPTTRWHRTFPKCNYQLVAADKGERHECFKVACPTPGFGKDKISGTYKPVWLYNSAELDLNDKPTTCEVFDFATNAWRYVFPASPHLILHTQDPVYVDGSLHWFTALSHEGETMVLSLDLHSETFQVISKAPFLNVSDEYYIVMCNLGDRLCVSEQKWPNQVIWSLDDSDHKTWKQIYSIDLIITSSLFFSAIFAFTPLAVLDKDKLLFYDSTHGDAFLTHDPDTKSYDLPYTSNRCATVVCYFPSLISIL</sequence>
<organism>
    <name type="scientific">Arabidopsis thaliana</name>
    <name type="common">Mouse-ear cress</name>
    <dbReference type="NCBI Taxonomy" id="3702"/>
    <lineage>
        <taxon>Eukaryota</taxon>
        <taxon>Viridiplantae</taxon>
        <taxon>Streptophyta</taxon>
        <taxon>Embryophyta</taxon>
        <taxon>Tracheophyta</taxon>
        <taxon>Spermatophyta</taxon>
        <taxon>Magnoliopsida</taxon>
        <taxon>eudicotyledons</taxon>
        <taxon>Gunneridae</taxon>
        <taxon>Pentapetalae</taxon>
        <taxon>rosids</taxon>
        <taxon>malvids</taxon>
        <taxon>Brassicales</taxon>
        <taxon>Brassicaceae</taxon>
        <taxon>Camelineae</taxon>
        <taxon>Arabidopsis</taxon>
    </lineage>
</organism>
<proteinExistence type="evidence at transcript level"/>
<dbReference type="EMBL" id="AL353995">
    <property type="protein sequence ID" value="CAB89409.1"/>
    <property type="molecule type" value="Genomic_DNA"/>
</dbReference>
<dbReference type="EMBL" id="CP002688">
    <property type="protein sequence ID" value="AED91527.1"/>
    <property type="molecule type" value="Genomic_DNA"/>
</dbReference>
<dbReference type="PIR" id="T50005">
    <property type="entry name" value="T50005"/>
</dbReference>
<dbReference type="RefSeq" id="NP_196596.1">
    <property type="nucleotide sequence ID" value="NM_121072.1"/>
</dbReference>
<dbReference type="SMR" id="Q9LX89"/>
<dbReference type="GlyGen" id="Q9LX89">
    <property type="glycosylation" value="1 site"/>
</dbReference>
<dbReference type="PaxDb" id="3702-AT5G10340.1"/>
<dbReference type="EnsemblPlants" id="AT5G10340.1">
    <property type="protein sequence ID" value="AT5G10340.1"/>
    <property type="gene ID" value="AT5G10340"/>
</dbReference>
<dbReference type="GeneID" id="830898"/>
<dbReference type="Gramene" id="AT5G10340.1">
    <property type="protein sequence ID" value="AT5G10340.1"/>
    <property type="gene ID" value="AT5G10340"/>
</dbReference>
<dbReference type="KEGG" id="ath:AT5G10340"/>
<dbReference type="Araport" id="AT5G10340"/>
<dbReference type="TAIR" id="AT5G10340"/>
<dbReference type="HOGENOM" id="CLU_027176_4_2_1"/>
<dbReference type="InParanoid" id="Q9LX89"/>
<dbReference type="OMA" id="SHEGETM"/>
<dbReference type="PhylomeDB" id="Q9LX89"/>
<dbReference type="PRO" id="PR:Q9LX89"/>
<dbReference type="Proteomes" id="UP000006548">
    <property type="component" value="Chromosome 5"/>
</dbReference>
<dbReference type="ExpressionAtlas" id="Q9LX89">
    <property type="expression patterns" value="baseline and differential"/>
</dbReference>
<dbReference type="InterPro" id="IPR006527">
    <property type="entry name" value="F-box-assoc_dom_typ1"/>
</dbReference>
<dbReference type="InterPro" id="IPR017451">
    <property type="entry name" value="F-box-assoc_interact_dom"/>
</dbReference>
<dbReference type="InterPro" id="IPR036047">
    <property type="entry name" value="F-box-like_dom_sf"/>
</dbReference>
<dbReference type="InterPro" id="IPR001810">
    <property type="entry name" value="F-box_dom"/>
</dbReference>
<dbReference type="InterPro" id="IPR011043">
    <property type="entry name" value="Gal_Oxase/kelch_b-propeller"/>
</dbReference>
<dbReference type="InterPro" id="IPR050796">
    <property type="entry name" value="SCF_F-box_component"/>
</dbReference>
<dbReference type="NCBIfam" id="TIGR01640">
    <property type="entry name" value="F_box_assoc_1"/>
    <property type="match status" value="1"/>
</dbReference>
<dbReference type="PANTHER" id="PTHR31672">
    <property type="entry name" value="BNACNNG10540D PROTEIN"/>
    <property type="match status" value="1"/>
</dbReference>
<dbReference type="PANTHER" id="PTHR31672:SF13">
    <property type="entry name" value="F-BOX PROTEIN CPR30-LIKE"/>
    <property type="match status" value="1"/>
</dbReference>
<dbReference type="Pfam" id="PF00646">
    <property type="entry name" value="F-box"/>
    <property type="match status" value="1"/>
</dbReference>
<dbReference type="Pfam" id="PF07734">
    <property type="entry name" value="FBA_1"/>
    <property type="match status" value="1"/>
</dbReference>
<dbReference type="SUPFAM" id="SSF81383">
    <property type="entry name" value="F-box domain"/>
    <property type="match status" value="1"/>
</dbReference>
<dbReference type="SUPFAM" id="SSF50965">
    <property type="entry name" value="Galactose oxidase, central domain"/>
    <property type="match status" value="1"/>
</dbReference>
<protein>
    <recommendedName>
        <fullName>F-box protein At5g10340</fullName>
    </recommendedName>
</protein>
<gene>
    <name type="ordered locus">At5g10340</name>
    <name type="ORF">F12B17.310</name>
</gene>
<name>FB255_ARATH</name>
<keyword id="KW-1185">Reference proteome</keyword>
<feature type="chain" id="PRO_0000283522" description="F-box protein At5g10340">
    <location>
        <begin position="1"/>
        <end position="445"/>
    </location>
</feature>
<feature type="domain" description="F-box">
    <location>
        <begin position="64"/>
        <end position="112"/>
    </location>
</feature>
<reference key="1">
    <citation type="journal article" date="2000" name="Nature">
        <title>Sequence and analysis of chromosome 5 of the plant Arabidopsis thaliana.</title>
        <authorList>
            <person name="Tabata S."/>
            <person name="Kaneko T."/>
            <person name="Nakamura Y."/>
            <person name="Kotani H."/>
            <person name="Kato T."/>
            <person name="Asamizu E."/>
            <person name="Miyajima N."/>
            <person name="Sasamoto S."/>
            <person name="Kimura T."/>
            <person name="Hosouchi T."/>
            <person name="Kawashima K."/>
            <person name="Kohara M."/>
            <person name="Matsumoto M."/>
            <person name="Matsuno A."/>
            <person name="Muraki A."/>
            <person name="Nakayama S."/>
            <person name="Nakazaki N."/>
            <person name="Naruo K."/>
            <person name="Okumura S."/>
            <person name="Shinpo S."/>
            <person name="Takeuchi C."/>
            <person name="Wada T."/>
            <person name="Watanabe A."/>
            <person name="Yamada M."/>
            <person name="Yasuda M."/>
            <person name="Sato S."/>
            <person name="de la Bastide M."/>
            <person name="Huang E."/>
            <person name="Spiegel L."/>
            <person name="Gnoj L."/>
            <person name="O'Shaughnessy A."/>
            <person name="Preston R."/>
            <person name="Habermann K."/>
            <person name="Murray J."/>
            <person name="Johnson D."/>
            <person name="Rohlfing T."/>
            <person name="Nelson J."/>
            <person name="Stoneking T."/>
            <person name="Pepin K."/>
            <person name="Spieth J."/>
            <person name="Sekhon M."/>
            <person name="Armstrong J."/>
            <person name="Becker M."/>
            <person name="Belter E."/>
            <person name="Cordum H."/>
            <person name="Cordes M."/>
            <person name="Courtney L."/>
            <person name="Courtney W."/>
            <person name="Dante M."/>
            <person name="Du H."/>
            <person name="Edwards J."/>
            <person name="Fryman J."/>
            <person name="Haakensen B."/>
            <person name="Lamar E."/>
            <person name="Latreille P."/>
            <person name="Leonard S."/>
            <person name="Meyer R."/>
            <person name="Mulvaney E."/>
            <person name="Ozersky P."/>
            <person name="Riley A."/>
            <person name="Strowmatt C."/>
            <person name="Wagner-McPherson C."/>
            <person name="Wollam A."/>
            <person name="Yoakum M."/>
            <person name="Bell M."/>
            <person name="Dedhia N."/>
            <person name="Parnell L."/>
            <person name="Shah R."/>
            <person name="Rodriguez M."/>
            <person name="Hoon See L."/>
            <person name="Vil D."/>
            <person name="Baker J."/>
            <person name="Kirchoff K."/>
            <person name="Toth K."/>
            <person name="King L."/>
            <person name="Bahret A."/>
            <person name="Miller B."/>
            <person name="Marra M.A."/>
            <person name="Martienssen R."/>
            <person name="McCombie W.R."/>
            <person name="Wilson R.K."/>
            <person name="Murphy G."/>
            <person name="Bancroft I."/>
            <person name="Volckaert G."/>
            <person name="Wambutt R."/>
            <person name="Duesterhoeft A."/>
            <person name="Stiekema W."/>
            <person name="Pohl T."/>
            <person name="Entian K.-D."/>
            <person name="Terryn N."/>
            <person name="Hartley N."/>
            <person name="Bent E."/>
            <person name="Johnson S."/>
            <person name="Langham S.-A."/>
            <person name="McCullagh B."/>
            <person name="Robben J."/>
            <person name="Grymonprez B."/>
            <person name="Zimmermann W."/>
            <person name="Ramsperger U."/>
            <person name="Wedler H."/>
            <person name="Balke K."/>
            <person name="Wedler E."/>
            <person name="Peters S."/>
            <person name="van Staveren M."/>
            <person name="Dirkse W."/>
            <person name="Mooijman P."/>
            <person name="Klein Lankhorst R."/>
            <person name="Weitzenegger T."/>
            <person name="Bothe G."/>
            <person name="Rose M."/>
            <person name="Hauf J."/>
            <person name="Berneiser S."/>
            <person name="Hempel S."/>
            <person name="Feldpausch M."/>
            <person name="Lamberth S."/>
            <person name="Villarroel R."/>
            <person name="Gielen J."/>
            <person name="Ardiles W."/>
            <person name="Bents O."/>
            <person name="Lemcke K."/>
            <person name="Kolesov G."/>
            <person name="Mayer K.F.X."/>
            <person name="Rudd S."/>
            <person name="Schoof H."/>
            <person name="Schueller C."/>
            <person name="Zaccaria P."/>
            <person name="Mewes H.-W."/>
            <person name="Bevan M."/>
            <person name="Fransz P.F."/>
        </authorList>
    </citation>
    <scope>NUCLEOTIDE SEQUENCE [LARGE SCALE GENOMIC DNA]</scope>
    <source>
        <strain>cv. Columbia</strain>
    </source>
</reference>
<reference key="2">
    <citation type="journal article" date="2017" name="Plant J.">
        <title>Araport11: a complete reannotation of the Arabidopsis thaliana reference genome.</title>
        <authorList>
            <person name="Cheng C.Y."/>
            <person name="Krishnakumar V."/>
            <person name="Chan A.P."/>
            <person name="Thibaud-Nissen F."/>
            <person name="Schobel S."/>
            <person name="Town C.D."/>
        </authorList>
    </citation>
    <scope>GENOME REANNOTATION</scope>
    <source>
        <strain>cv. Columbia</strain>
    </source>
</reference>
<accession>Q9LX89</accession>